<name>SYGA_SYNE7</name>
<evidence type="ECO:0000255" key="1">
    <source>
        <dbReference type="HAMAP-Rule" id="MF_00254"/>
    </source>
</evidence>
<feature type="chain" id="PRO_1000047516" description="Glycine--tRNA ligase alpha subunit">
    <location>
        <begin position="1"/>
        <end position="292"/>
    </location>
</feature>
<reference key="1">
    <citation type="submission" date="2005-08" db="EMBL/GenBank/DDBJ databases">
        <title>Complete sequence of chromosome 1 of Synechococcus elongatus PCC 7942.</title>
        <authorList>
            <consortium name="US DOE Joint Genome Institute"/>
            <person name="Copeland A."/>
            <person name="Lucas S."/>
            <person name="Lapidus A."/>
            <person name="Barry K."/>
            <person name="Detter J.C."/>
            <person name="Glavina T."/>
            <person name="Hammon N."/>
            <person name="Israni S."/>
            <person name="Pitluck S."/>
            <person name="Schmutz J."/>
            <person name="Larimer F."/>
            <person name="Land M."/>
            <person name="Kyrpides N."/>
            <person name="Lykidis A."/>
            <person name="Golden S."/>
            <person name="Richardson P."/>
        </authorList>
    </citation>
    <scope>NUCLEOTIDE SEQUENCE [LARGE SCALE GENOMIC DNA]</scope>
    <source>
        <strain>ATCC 33912 / PCC 7942 / FACHB-805</strain>
    </source>
</reference>
<accession>Q31KD2</accession>
<gene>
    <name evidence="1" type="primary">glyQ</name>
    <name type="ordered locus">Synpcc7942_2457</name>
</gene>
<proteinExistence type="inferred from homology"/>
<dbReference type="EC" id="6.1.1.14" evidence="1"/>
<dbReference type="EMBL" id="CP000100">
    <property type="protein sequence ID" value="ABB58487.1"/>
    <property type="molecule type" value="Genomic_DNA"/>
</dbReference>
<dbReference type="RefSeq" id="WP_011378472.1">
    <property type="nucleotide sequence ID" value="NZ_JACJTX010000001.1"/>
</dbReference>
<dbReference type="SMR" id="Q31KD2"/>
<dbReference type="STRING" id="1140.Synpcc7942_2457"/>
<dbReference type="PaxDb" id="1140-Synpcc7942_2457"/>
<dbReference type="GeneID" id="72431349"/>
<dbReference type="KEGG" id="syf:Synpcc7942_2457"/>
<dbReference type="eggNOG" id="COG0752">
    <property type="taxonomic scope" value="Bacteria"/>
</dbReference>
<dbReference type="HOGENOM" id="CLU_057066_1_0_3"/>
<dbReference type="OrthoDB" id="9802183at2"/>
<dbReference type="BioCyc" id="SYNEL:SYNPCC7942_2457-MONOMER"/>
<dbReference type="Proteomes" id="UP000889800">
    <property type="component" value="Chromosome"/>
</dbReference>
<dbReference type="GO" id="GO:0005829">
    <property type="term" value="C:cytosol"/>
    <property type="evidence" value="ECO:0007669"/>
    <property type="project" value="TreeGrafter"/>
</dbReference>
<dbReference type="GO" id="GO:0005524">
    <property type="term" value="F:ATP binding"/>
    <property type="evidence" value="ECO:0007669"/>
    <property type="project" value="UniProtKB-UniRule"/>
</dbReference>
<dbReference type="GO" id="GO:0004820">
    <property type="term" value="F:glycine-tRNA ligase activity"/>
    <property type="evidence" value="ECO:0007669"/>
    <property type="project" value="UniProtKB-UniRule"/>
</dbReference>
<dbReference type="GO" id="GO:0006426">
    <property type="term" value="P:glycyl-tRNA aminoacylation"/>
    <property type="evidence" value="ECO:0007669"/>
    <property type="project" value="UniProtKB-UniRule"/>
</dbReference>
<dbReference type="CDD" id="cd00733">
    <property type="entry name" value="GlyRS_alpha_core"/>
    <property type="match status" value="1"/>
</dbReference>
<dbReference type="FunFam" id="3.30.930.10:FF:000006">
    <property type="entry name" value="Glycine--tRNA ligase alpha subunit"/>
    <property type="match status" value="1"/>
</dbReference>
<dbReference type="Gene3D" id="3.30.930.10">
    <property type="entry name" value="Bira Bifunctional Protein, Domain 2"/>
    <property type="match status" value="1"/>
</dbReference>
<dbReference type="Gene3D" id="1.20.58.180">
    <property type="entry name" value="Class II aaRS and biotin synthetases, domain 2"/>
    <property type="match status" value="1"/>
</dbReference>
<dbReference type="HAMAP" id="MF_00254">
    <property type="entry name" value="Gly_tRNA_synth_alpha"/>
    <property type="match status" value="1"/>
</dbReference>
<dbReference type="InterPro" id="IPR045864">
    <property type="entry name" value="aa-tRNA-synth_II/BPL/LPL"/>
</dbReference>
<dbReference type="InterPro" id="IPR006194">
    <property type="entry name" value="Gly-tRNA-synth_heterodimer"/>
</dbReference>
<dbReference type="InterPro" id="IPR002310">
    <property type="entry name" value="Gly-tRNA_ligase_asu"/>
</dbReference>
<dbReference type="NCBIfam" id="TIGR00388">
    <property type="entry name" value="glyQ"/>
    <property type="match status" value="1"/>
</dbReference>
<dbReference type="NCBIfam" id="NF006827">
    <property type="entry name" value="PRK09348.1"/>
    <property type="match status" value="1"/>
</dbReference>
<dbReference type="PANTHER" id="PTHR30075:SF2">
    <property type="entry name" value="GLYCINE--TRNA LIGASE, CHLOROPLASTIC_MITOCHONDRIAL 2"/>
    <property type="match status" value="1"/>
</dbReference>
<dbReference type="PANTHER" id="PTHR30075">
    <property type="entry name" value="GLYCYL-TRNA SYNTHETASE"/>
    <property type="match status" value="1"/>
</dbReference>
<dbReference type="Pfam" id="PF02091">
    <property type="entry name" value="tRNA-synt_2e"/>
    <property type="match status" value="1"/>
</dbReference>
<dbReference type="PRINTS" id="PR01044">
    <property type="entry name" value="TRNASYNTHGA"/>
</dbReference>
<dbReference type="SUPFAM" id="SSF55681">
    <property type="entry name" value="Class II aaRS and biotin synthetases"/>
    <property type="match status" value="1"/>
</dbReference>
<dbReference type="PROSITE" id="PS50861">
    <property type="entry name" value="AA_TRNA_LIGASE_II_GLYAB"/>
    <property type="match status" value="1"/>
</dbReference>
<comment type="catalytic activity">
    <reaction evidence="1">
        <text>tRNA(Gly) + glycine + ATP = glycyl-tRNA(Gly) + AMP + diphosphate</text>
        <dbReference type="Rhea" id="RHEA:16013"/>
        <dbReference type="Rhea" id="RHEA-COMP:9664"/>
        <dbReference type="Rhea" id="RHEA-COMP:9683"/>
        <dbReference type="ChEBI" id="CHEBI:30616"/>
        <dbReference type="ChEBI" id="CHEBI:33019"/>
        <dbReference type="ChEBI" id="CHEBI:57305"/>
        <dbReference type="ChEBI" id="CHEBI:78442"/>
        <dbReference type="ChEBI" id="CHEBI:78522"/>
        <dbReference type="ChEBI" id="CHEBI:456215"/>
        <dbReference type="EC" id="6.1.1.14"/>
    </reaction>
</comment>
<comment type="subunit">
    <text evidence="1">Tetramer of two alpha and two beta subunits.</text>
</comment>
<comment type="subcellular location">
    <subcellularLocation>
        <location evidence="1">Cytoplasm</location>
    </subcellularLocation>
</comment>
<comment type="similarity">
    <text evidence="1">Belongs to the class-II aminoacyl-tRNA synthetase family.</text>
</comment>
<protein>
    <recommendedName>
        <fullName evidence="1">Glycine--tRNA ligase alpha subunit</fullName>
        <ecNumber evidence="1">6.1.1.14</ecNumber>
    </recommendedName>
    <alternativeName>
        <fullName evidence="1">Glycyl-tRNA synthetase alpha subunit</fullName>
        <shortName evidence="1">GlyRS</shortName>
    </alternativeName>
</protein>
<keyword id="KW-0030">Aminoacyl-tRNA synthetase</keyword>
<keyword id="KW-0067">ATP-binding</keyword>
<keyword id="KW-0963">Cytoplasm</keyword>
<keyword id="KW-0436">Ligase</keyword>
<keyword id="KW-0547">Nucleotide-binding</keyword>
<keyword id="KW-0648">Protein biosynthesis</keyword>
<keyword id="KW-1185">Reference proteome</keyword>
<organism>
    <name type="scientific">Synechococcus elongatus (strain ATCC 33912 / PCC 7942 / FACHB-805)</name>
    <name type="common">Anacystis nidulans R2</name>
    <dbReference type="NCBI Taxonomy" id="1140"/>
    <lineage>
        <taxon>Bacteria</taxon>
        <taxon>Bacillati</taxon>
        <taxon>Cyanobacteriota</taxon>
        <taxon>Cyanophyceae</taxon>
        <taxon>Synechococcales</taxon>
        <taxon>Synechococcaceae</taxon>
        <taxon>Synechococcus</taxon>
    </lineage>
</organism>
<sequence length="292" mass="33757">MNFQSVIATLNQFWADRGCLIAQPYDTEKGAGTMNPHTFLRAIGPEPWAVAYVEPCRRPTDGRYGENPNRYQHYYQYQVLIKPSPEGIQETYLDSLRALGIQPEEHDIRFVEDNWESPTLGAWGVGWEVWLDGMEVTQFTYFQQCGGIDCRPVSIEITYGLERLAMYLQNVEAFTEIKWTDRLSYGDVHLQSEIEQCTYNFEASTPELLFQLFGLYEQEATQLIEKGLVHPSLDYVLKCSHSFNLLDARGLISVTERTRYIGRIRNMARQVAKLYLEQREQLGFPLLQKVTA</sequence>